<sequence length="123" mass="13665">MFEITGINVSGALKAVVMATGFENPLSSVNEIETKLSALLGSETTGEILFDLLCANGPEWNRFVTLEMKYGRIMLDTAKIIDEQDVPTHILSKLTFTLRNHPEYLEASVLSPDDVRQVLSMDF</sequence>
<keyword id="KW-0002">3D-structure</keyword>
<keyword id="KW-1185">Reference proteome</keyword>
<keyword id="KW-1277">Toxin-antitoxin system</keyword>
<feature type="chain" id="PRO_0000169280" description="Antitoxin RnlB">
    <location>
        <begin position="1"/>
        <end position="123"/>
    </location>
</feature>
<feature type="strand" evidence="5">
    <location>
        <begin position="2"/>
        <end position="7"/>
    </location>
</feature>
<feature type="strand" evidence="5">
    <location>
        <begin position="11"/>
        <end position="19"/>
    </location>
</feature>
<feature type="strand" evidence="5">
    <location>
        <begin position="21"/>
        <end position="23"/>
    </location>
</feature>
<feature type="helix" evidence="5">
    <location>
        <begin position="25"/>
        <end position="27"/>
    </location>
</feature>
<feature type="helix" evidence="5">
    <location>
        <begin position="29"/>
        <end position="39"/>
    </location>
</feature>
<feature type="strand" evidence="5">
    <location>
        <begin position="46"/>
        <end position="51"/>
    </location>
</feature>
<feature type="helix" evidence="5">
    <location>
        <begin position="53"/>
        <end position="56"/>
    </location>
</feature>
<feature type="strand" evidence="5">
    <location>
        <begin position="62"/>
        <end position="69"/>
    </location>
</feature>
<feature type="strand" evidence="5">
    <location>
        <begin position="72"/>
        <end position="81"/>
    </location>
</feature>
<feature type="helix" evidence="5">
    <location>
        <begin position="83"/>
        <end position="85"/>
    </location>
</feature>
<feature type="helix" evidence="5">
    <location>
        <begin position="88"/>
        <end position="99"/>
    </location>
</feature>
<feature type="helix" evidence="5">
    <location>
        <begin position="102"/>
        <end position="106"/>
    </location>
</feature>
<feature type="helix" evidence="5">
    <location>
        <begin position="112"/>
        <end position="115"/>
    </location>
</feature>
<reference key="1">
    <citation type="journal article" date="1997" name="Science">
        <title>The complete genome sequence of Escherichia coli K-12.</title>
        <authorList>
            <person name="Blattner F.R."/>
            <person name="Plunkett G. III"/>
            <person name="Bloch C.A."/>
            <person name="Perna N.T."/>
            <person name="Burland V."/>
            <person name="Riley M."/>
            <person name="Collado-Vides J."/>
            <person name="Glasner J.D."/>
            <person name="Rode C.K."/>
            <person name="Mayhew G.F."/>
            <person name="Gregor J."/>
            <person name="Davis N.W."/>
            <person name="Kirkpatrick H.A."/>
            <person name="Goeden M.A."/>
            <person name="Rose D.J."/>
            <person name="Mau B."/>
            <person name="Shao Y."/>
        </authorList>
    </citation>
    <scope>NUCLEOTIDE SEQUENCE [LARGE SCALE GENOMIC DNA]</scope>
    <source>
        <strain>K12 / MG1655 / ATCC 47076</strain>
    </source>
</reference>
<reference key="2">
    <citation type="journal article" date="2006" name="Mol. Syst. Biol.">
        <title>Highly accurate genome sequences of Escherichia coli K-12 strains MG1655 and W3110.</title>
        <authorList>
            <person name="Hayashi K."/>
            <person name="Morooka N."/>
            <person name="Yamamoto Y."/>
            <person name="Fujita K."/>
            <person name="Isono K."/>
            <person name="Choi S."/>
            <person name="Ohtsubo E."/>
            <person name="Baba T."/>
            <person name="Wanner B.L."/>
            <person name="Mori H."/>
            <person name="Horiuchi T."/>
        </authorList>
    </citation>
    <scope>NUCLEOTIDE SEQUENCE [LARGE SCALE GENOMIC DNA]</scope>
    <source>
        <strain>K12 / W3110 / ATCC 27325 / DSM 5911</strain>
    </source>
</reference>
<reference key="3">
    <citation type="journal article" date="2010" name="Genetics">
        <title>IscR regulates RNase LS activity by repressing rnlA transcription.</title>
        <authorList>
            <person name="Otsuka Y."/>
            <person name="Miki K."/>
            <person name="Koga M."/>
            <person name="Katayama N."/>
            <person name="Morimoto W."/>
            <person name="Takahashi Y."/>
            <person name="Yonesaki T."/>
        </authorList>
    </citation>
    <scope>INDUCTION</scope>
    <source>
        <strain>K12</strain>
    </source>
</reference>
<reference key="4">
    <citation type="journal article" date="2011" name="Genetics">
        <title>Escherichia coli rnlA and rnlB compose a novel toxin-antitoxin system.</title>
        <authorList>
            <person name="Koga M."/>
            <person name="Otsuka Y."/>
            <person name="Lemire S."/>
            <person name="Yonesaki T."/>
        </authorList>
    </citation>
    <scope>FUNCTION AS AN ANTITOXIN</scope>
    <scope>INTERACTION WITH RNLA</scope>
    <scope>PROBABLE CLEAVAGE BY LON AND CPLXP PROTEASES</scope>
    <scope>DISRUPTION PHENOTYPE</scope>
    <source>
        <strain>K12</strain>
    </source>
</reference>
<reference key="5">
    <citation type="journal article" date="2012" name="Mol. Microbiol.">
        <title>Dmd of bacteriophage T4 functions as an antitoxin against Escherichia coli LsoA and RnlA toxins.</title>
        <authorList>
            <person name="Otsuka Y."/>
            <person name="Yonesaki T."/>
        </authorList>
    </citation>
    <scope>FUNCTION AS AN ANTITOXIN</scope>
    <source>
        <strain>K12 / W3110 / ATCC 27325 / DSM 5911</strain>
    </source>
</reference>
<comment type="function">
    <text evidence="2 3">Antitoxin component of a type II toxin-antitoxin (TA) system. A labile antitoxin (half-life of 2.1 minutes) that inhibits the endonuclease activity of cognate toxin RnlA but not that of non-cognate toxin LsoA.</text>
</comment>
<comment type="subunit">
    <text>Can form a complex with cognate toxin RnlA.</text>
</comment>
<comment type="interaction">
    <interactant intactId="EBI-21183386">
        <id>P52130</id>
    </interactant>
    <interactant intactId="EBI-560462">
        <id>P52129</id>
        <label>rnlA</label>
    </interactant>
    <organismsDiffer>false</organismsDiffer>
    <experiments>2</experiments>
</comment>
<comment type="induction">
    <text evidence="1">Not repressed by IscR. rnlA-rnlB forms an operon, the downstream rnlB also has its own promoter.</text>
</comment>
<comment type="PTM">
    <text>Probably degraded by CplXP and Lon proteases.</text>
</comment>
<comment type="disruption phenotype">
    <text evidence="2">Essential, it cannot be deleted unless rnlA is also disrupted.</text>
</comment>
<comment type="sequence caution" evidence="4">
    <conflict type="erroneous initiation">
        <sequence resource="EMBL-CDS" id="AAA79800"/>
    </conflict>
    <text>Truncated N-terminus.</text>
</comment>
<protein>
    <recommendedName>
        <fullName>Antitoxin RnlB</fullName>
    </recommendedName>
</protein>
<organism>
    <name type="scientific">Escherichia coli (strain K12)</name>
    <dbReference type="NCBI Taxonomy" id="83333"/>
    <lineage>
        <taxon>Bacteria</taxon>
        <taxon>Pseudomonadati</taxon>
        <taxon>Pseudomonadota</taxon>
        <taxon>Gammaproteobacteria</taxon>
        <taxon>Enterobacterales</taxon>
        <taxon>Enterobacteriaceae</taxon>
        <taxon>Escherichia</taxon>
    </lineage>
</organism>
<name>RNLB_ECOLI</name>
<dbReference type="EMBL" id="U36840">
    <property type="protein sequence ID" value="AAA79800.1"/>
    <property type="status" value="ALT_INIT"/>
    <property type="molecule type" value="Genomic_DNA"/>
</dbReference>
<dbReference type="EMBL" id="U00096">
    <property type="protein sequence ID" value="AAC75679.2"/>
    <property type="molecule type" value="Genomic_DNA"/>
</dbReference>
<dbReference type="EMBL" id="AP009048">
    <property type="protein sequence ID" value="BAE76766.1"/>
    <property type="molecule type" value="Genomic_DNA"/>
</dbReference>
<dbReference type="PIR" id="T08643">
    <property type="entry name" value="T08643"/>
</dbReference>
<dbReference type="RefSeq" id="NP_417120.2">
    <property type="nucleotide sequence ID" value="NC_000913.3"/>
</dbReference>
<dbReference type="RefSeq" id="WP_000461704.1">
    <property type="nucleotide sequence ID" value="NZ_LN832404.1"/>
</dbReference>
<dbReference type="PDB" id="6Y2P">
    <property type="method" value="X-ray"/>
    <property type="resolution" value="2.64 A"/>
    <property type="chains" value="C/D=1-123"/>
</dbReference>
<dbReference type="PDBsum" id="6Y2P"/>
<dbReference type="SASBDB" id="P52130"/>
<dbReference type="SMR" id="P52130"/>
<dbReference type="BioGRID" id="4261565">
    <property type="interactions" value="16"/>
</dbReference>
<dbReference type="ComplexPortal" id="CPX-4115">
    <property type="entry name" value="RnlAB toxin-antitoxin complex"/>
</dbReference>
<dbReference type="FunCoup" id="P52130">
    <property type="interactions" value="6"/>
</dbReference>
<dbReference type="IntAct" id="P52130">
    <property type="interactions" value="1"/>
</dbReference>
<dbReference type="STRING" id="511145.b2631"/>
<dbReference type="PaxDb" id="511145-b2631"/>
<dbReference type="EnsemblBacteria" id="AAC75679">
    <property type="protein sequence ID" value="AAC75679"/>
    <property type="gene ID" value="b2631"/>
</dbReference>
<dbReference type="GeneID" id="947113"/>
<dbReference type="KEGG" id="ecj:JW5418"/>
<dbReference type="KEGG" id="eco:b2631"/>
<dbReference type="KEGG" id="ecoc:C3026_14555"/>
<dbReference type="PATRIC" id="fig|511145.12.peg.2725"/>
<dbReference type="EchoBASE" id="EB2993"/>
<dbReference type="eggNOG" id="ENOG50331J3">
    <property type="taxonomic scope" value="Bacteria"/>
</dbReference>
<dbReference type="HOGENOM" id="CLU_163902_1_0_6"/>
<dbReference type="InParanoid" id="P52130"/>
<dbReference type="OMA" id="CSNGFEW"/>
<dbReference type="OrthoDB" id="7069026at2"/>
<dbReference type="BioCyc" id="EcoCyc:G7366-MONOMER"/>
<dbReference type="BioCyc" id="MetaCyc:G7366-MONOMER"/>
<dbReference type="PRO" id="PR:P52130"/>
<dbReference type="Proteomes" id="UP000000625">
    <property type="component" value="Chromosome"/>
</dbReference>
<dbReference type="GO" id="GO:0110001">
    <property type="term" value="C:toxin-antitoxin complex"/>
    <property type="evidence" value="ECO:0000353"/>
    <property type="project" value="ComplexPortal"/>
</dbReference>
<dbReference type="GO" id="GO:0006355">
    <property type="term" value="P:regulation of DNA-templated transcription"/>
    <property type="evidence" value="ECO:0000303"/>
    <property type="project" value="ComplexPortal"/>
</dbReference>
<dbReference type="GO" id="GO:0040008">
    <property type="term" value="P:regulation of growth"/>
    <property type="evidence" value="ECO:0000303"/>
    <property type="project" value="ComplexPortal"/>
</dbReference>
<dbReference type="GO" id="GO:0044010">
    <property type="term" value="P:single-species biofilm formation"/>
    <property type="evidence" value="ECO:0000303"/>
    <property type="project" value="ComplexPortal"/>
</dbReference>
<dbReference type="InterPro" id="IPR031834">
    <property type="entry name" value="RnlB/LsoB_antitoxin"/>
</dbReference>
<dbReference type="Pfam" id="PF15933">
    <property type="entry name" value="RnlB_antitoxin"/>
    <property type="match status" value="1"/>
</dbReference>
<accession>P52130</accession>
<accession>Q2MAE0</accession>
<evidence type="ECO:0000269" key="1">
    <source>
    </source>
</evidence>
<evidence type="ECO:0000269" key="2">
    <source>
    </source>
</evidence>
<evidence type="ECO:0000269" key="3">
    <source>
    </source>
</evidence>
<evidence type="ECO:0000305" key="4"/>
<evidence type="ECO:0007829" key="5">
    <source>
        <dbReference type="PDB" id="6Y2P"/>
    </source>
</evidence>
<proteinExistence type="evidence at protein level"/>
<gene>
    <name type="primary">rnlB</name>
    <name type="synonym">yfjO</name>
    <name type="ordered locus">b2631</name>
    <name type="ordered locus">JW5418</name>
</gene>